<sequence length="215" mass="23833">MLQVYLVRHGETLWNAARRIQGQSDSALTEKGEQQAYQVGQRVRDLGITHVIASDLGRTRRTAEIIADACGCSVVLDPRLRELNMGVLEQRKLDSLSAEEESWRKALVDGTENGRIPQGESMSEMAQRMRQALDACLSLPENSRPLIVSHGMALGVLVSTILGLPANAERRLRLRNCSISRVDHQQSPWLASGWVVETAGDVSHLEDTALDELQR</sequence>
<gene>
    <name evidence="1" type="primary">gpmB</name>
    <name type="ordered locus">ETA_06930</name>
</gene>
<feature type="chain" id="PRO_1000136007" description="Probable phosphoglycerate mutase GpmB">
    <location>
        <begin position="1"/>
        <end position="215"/>
    </location>
</feature>
<feature type="active site" description="Tele-phosphohistidine intermediate" evidence="1">
    <location>
        <position position="9"/>
    </location>
</feature>
<feature type="active site" description="Proton donor/acceptor" evidence="1">
    <location>
        <position position="82"/>
    </location>
</feature>
<feature type="binding site" evidence="1">
    <location>
        <begin position="8"/>
        <end position="15"/>
    </location>
    <ligand>
        <name>substrate</name>
    </ligand>
</feature>
<feature type="binding site" evidence="1">
    <location>
        <begin position="21"/>
        <end position="22"/>
    </location>
    <ligand>
        <name>substrate</name>
    </ligand>
</feature>
<feature type="binding site" evidence="1">
    <location>
        <position position="58"/>
    </location>
    <ligand>
        <name>substrate</name>
    </ligand>
</feature>
<feature type="binding site" evidence="1">
    <location>
        <position position="60"/>
    </location>
    <ligand>
        <name>substrate</name>
    </ligand>
</feature>
<feature type="binding site" evidence="1">
    <location>
        <begin position="82"/>
        <end position="85"/>
    </location>
    <ligand>
        <name>substrate</name>
    </ligand>
</feature>
<feature type="binding site" evidence="1">
    <location>
        <begin position="151"/>
        <end position="152"/>
    </location>
    <ligand>
        <name>substrate</name>
    </ligand>
</feature>
<feature type="site" description="Transition state stabilizer" evidence="1">
    <location>
        <position position="150"/>
    </location>
</feature>
<reference key="1">
    <citation type="journal article" date="2008" name="Environ. Microbiol.">
        <title>The genome of Erwinia tasmaniensis strain Et1/99, a non-pathogenic bacterium in the genus Erwinia.</title>
        <authorList>
            <person name="Kube M."/>
            <person name="Migdoll A.M."/>
            <person name="Mueller I."/>
            <person name="Kuhl H."/>
            <person name="Beck A."/>
            <person name="Reinhardt R."/>
            <person name="Geider K."/>
        </authorList>
    </citation>
    <scope>NUCLEOTIDE SEQUENCE [LARGE SCALE GENOMIC DNA]</scope>
    <source>
        <strain>DSM 17950 / CFBP 7177 / CIP 109463 / NCPPB 4357 / Et1/99</strain>
    </source>
</reference>
<proteinExistence type="inferred from homology"/>
<name>GPMB_ERWT9</name>
<comment type="catalytic activity">
    <reaction evidence="1">
        <text>(2R)-2-phosphoglycerate = (2R)-3-phosphoglycerate</text>
        <dbReference type="Rhea" id="RHEA:15901"/>
        <dbReference type="ChEBI" id="CHEBI:58272"/>
        <dbReference type="ChEBI" id="CHEBI:58289"/>
    </reaction>
</comment>
<comment type="pathway">
    <text evidence="1">Carbohydrate degradation; glycolysis; pyruvate from D-glyceraldehyde 3-phosphate: step 3/5.</text>
</comment>
<comment type="similarity">
    <text evidence="1">Belongs to the phosphoglycerate mutase family. GpmB subfamily.</text>
</comment>
<protein>
    <recommendedName>
        <fullName evidence="1">Probable phosphoglycerate mutase GpmB</fullName>
        <ecNumber evidence="1">5.4.2.-</ecNumber>
    </recommendedName>
    <alternativeName>
        <fullName evidence="1">PGAM</fullName>
    </alternativeName>
    <alternativeName>
        <fullName evidence="1">Phosphoglyceromutase</fullName>
    </alternativeName>
</protein>
<evidence type="ECO:0000255" key="1">
    <source>
        <dbReference type="HAMAP-Rule" id="MF_01040"/>
    </source>
</evidence>
<keyword id="KW-0324">Glycolysis</keyword>
<keyword id="KW-0413">Isomerase</keyword>
<keyword id="KW-1185">Reference proteome</keyword>
<organism>
    <name type="scientific">Erwinia tasmaniensis (strain DSM 17950 / CFBP 7177 / CIP 109463 / NCPPB 4357 / Et1/99)</name>
    <dbReference type="NCBI Taxonomy" id="465817"/>
    <lineage>
        <taxon>Bacteria</taxon>
        <taxon>Pseudomonadati</taxon>
        <taxon>Pseudomonadota</taxon>
        <taxon>Gammaproteobacteria</taxon>
        <taxon>Enterobacterales</taxon>
        <taxon>Erwiniaceae</taxon>
        <taxon>Erwinia</taxon>
    </lineage>
</organism>
<accession>B2VH13</accession>
<dbReference type="EC" id="5.4.2.-" evidence="1"/>
<dbReference type="EMBL" id="CU468135">
    <property type="protein sequence ID" value="CAO95739.1"/>
    <property type="molecule type" value="Genomic_DNA"/>
</dbReference>
<dbReference type="RefSeq" id="WP_012440441.1">
    <property type="nucleotide sequence ID" value="NC_010694.1"/>
</dbReference>
<dbReference type="SMR" id="B2VH13"/>
<dbReference type="STRING" id="465817.ETA_06930"/>
<dbReference type="KEGG" id="eta:ETA_06930"/>
<dbReference type="eggNOG" id="COG0406">
    <property type="taxonomic scope" value="Bacteria"/>
</dbReference>
<dbReference type="HOGENOM" id="CLU_033323_9_5_6"/>
<dbReference type="OrthoDB" id="9783269at2"/>
<dbReference type="UniPathway" id="UPA00109">
    <property type="reaction ID" value="UER00186"/>
</dbReference>
<dbReference type="Proteomes" id="UP000001726">
    <property type="component" value="Chromosome"/>
</dbReference>
<dbReference type="GO" id="GO:0005737">
    <property type="term" value="C:cytoplasm"/>
    <property type="evidence" value="ECO:0007669"/>
    <property type="project" value="TreeGrafter"/>
</dbReference>
<dbReference type="GO" id="GO:0016791">
    <property type="term" value="F:phosphatase activity"/>
    <property type="evidence" value="ECO:0007669"/>
    <property type="project" value="TreeGrafter"/>
</dbReference>
<dbReference type="GO" id="GO:0004619">
    <property type="term" value="F:phosphoglycerate mutase activity"/>
    <property type="evidence" value="ECO:0007669"/>
    <property type="project" value="UniProtKB-UniRule"/>
</dbReference>
<dbReference type="GO" id="GO:0006096">
    <property type="term" value="P:glycolytic process"/>
    <property type="evidence" value="ECO:0007669"/>
    <property type="project" value="UniProtKB-UniRule"/>
</dbReference>
<dbReference type="CDD" id="cd07067">
    <property type="entry name" value="HP_PGM_like"/>
    <property type="match status" value="1"/>
</dbReference>
<dbReference type="Gene3D" id="3.40.50.1240">
    <property type="entry name" value="Phosphoglycerate mutase-like"/>
    <property type="match status" value="1"/>
</dbReference>
<dbReference type="HAMAP" id="MF_01040">
    <property type="entry name" value="PGAM_GpmB"/>
    <property type="match status" value="1"/>
</dbReference>
<dbReference type="InterPro" id="IPR013078">
    <property type="entry name" value="His_Pase_superF_clade-1"/>
</dbReference>
<dbReference type="InterPro" id="IPR029033">
    <property type="entry name" value="His_PPase_superfam"/>
</dbReference>
<dbReference type="InterPro" id="IPR001345">
    <property type="entry name" value="PG/BPGM_mutase_AS"/>
</dbReference>
<dbReference type="InterPro" id="IPR050275">
    <property type="entry name" value="PGM_Phosphatase"/>
</dbReference>
<dbReference type="InterPro" id="IPR023086">
    <property type="entry name" value="Phosphoglycerate_mutase_GpmB"/>
</dbReference>
<dbReference type="NCBIfam" id="NF002901">
    <property type="entry name" value="PRK03482.1"/>
    <property type="match status" value="1"/>
</dbReference>
<dbReference type="PANTHER" id="PTHR48100">
    <property type="entry name" value="BROAD-SPECIFICITY PHOSPHATASE YOR283W-RELATED"/>
    <property type="match status" value="1"/>
</dbReference>
<dbReference type="PANTHER" id="PTHR48100:SF1">
    <property type="entry name" value="HISTIDINE PHOSPHATASE FAMILY PROTEIN-RELATED"/>
    <property type="match status" value="1"/>
</dbReference>
<dbReference type="Pfam" id="PF00300">
    <property type="entry name" value="His_Phos_1"/>
    <property type="match status" value="1"/>
</dbReference>
<dbReference type="SMART" id="SM00855">
    <property type="entry name" value="PGAM"/>
    <property type="match status" value="1"/>
</dbReference>
<dbReference type="SUPFAM" id="SSF53254">
    <property type="entry name" value="Phosphoglycerate mutase-like"/>
    <property type="match status" value="1"/>
</dbReference>
<dbReference type="PROSITE" id="PS00175">
    <property type="entry name" value="PG_MUTASE"/>
    <property type="match status" value="1"/>
</dbReference>